<feature type="chain" id="PRO_0000102689" description="Ribosome-binding factor A">
    <location>
        <begin position="1"/>
        <end position="131"/>
    </location>
</feature>
<comment type="function">
    <text evidence="1">One of several proteins that assist in the late maturation steps of the functional core of the 30S ribosomal subunit. Associates with free 30S ribosomal subunits (but not with 30S subunits that are part of 70S ribosomes or polysomes). Required for efficient processing of 16S rRNA. May interact with the 5'-terminal helix region of 16S rRNA.</text>
</comment>
<comment type="subunit">
    <text evidence="1">Monomer. Binds 30S ribosomal subunits, but not 50S ribosomal subunits or 70S ribosomes.</text>
</comment>
<comment type="subcellular location">
    <subcellularLocation>
        <location evidence="1">Cytoplasm</location>
    </subcellularLocation>
</comment>
<comment type="similarity">
    <text evidence="1">Belongs to the RbfA family.</text>
</comment>
<gene>
    <name evidence="1" type="primary">rbfA</name>
    <name type="ordered locus">MS1442</name>
</gene>
<evidence type="ECO:0000255" key="1">
    <source>
        <dbReference type="HAMAP-Rule" id="MF_00003"/>
    </source>
</evidence>
<protein>
    <recommendedName>
        <fullName evidence="1">Ribosome-binding factor A</fullName>
    </recommendedName>
</protein>
<organism>
    <name type="scientific">Mannheimia succiniciproducens (strain KCTC 0769BP / MBEL55E)</name>
    <dbReference type="NCBI Taxonomy" id="221988"/>
    <lineage>
        <taxon>Bacteria</taxon>
        <taxon>Pseudomonadati</taxon>
        <taxon>Pseudomonadota</taxon>
        <taxon>Gammaproteobacteria</taxon>
        <taxon>Pasteurellales</taxon>
        <taxon>Pasteurellaceae</taxon>
        <taxon>Basfia</taxon>
    </lineage>
</organism>
<accession>Q65SL1</accession>
<reference key="1">
    <citation type="journal article" date="2004" name="Nat. Biotechnol.">
        <title>The genome sequence of the capnophilic rumen bacterium Mannheimia succiniciproducens.</title>
        <authorList>
            <person name="Hong S.H."/>
            <person name="Kim J.S."/>
            <person name="Lee S.Y."/>
            <person name="In Y.H."/>
            <person name="Choi S.S."/>
            <person name="Rih J.-K."/>
            <person name="Kim C.H."/>
            <person name="Jeong H."/>
            <person name="Hur C.G."/>
            <person name="Kim J.J."/>
        </authorList>
    </citation>
    <scope>NUCLEOTIDE SEQUENCE [LARGE SCALE GENOMIC DNA]</scope>
    <source>
        <strain>KCTC 0769BP / MBEL55E</strain>
    </source>
</reference>
<sequence length="131" mass="15190">MSREFKRSDRVAQELQKEIAVILQREVKDPRIGMVTVSDVEVSRDLAYAKIFVTFLFNNDDEAIKQGMKALEKAAPYIRSLVGKAMRLRIVPELRFEYDRSLVEGMRMSNLVTNVVRSDKERHIDEENGED</sequence>
<keyword id="KW-0963">Cytoplasm</keyword>
<keyword id="KW-0690">Ribosome biogenesis</keyword>
<dbReference type="EMBL" id="AE016827">
    <property type="protein sequence ID" value="AAU38049.1"/>
    <property type="molecule type" value="Genomic_DNA"/>
</dbReference>
<dbReference type="RefSeq" id="WP_011200616.1">
    <property type="nucleotide sequence ID" value="NC_006300.1"/>
</dbReference>
<dbReference type="SMR" id="Q65SL1"/>
<dbReference type="STRING" id="221988.MS1442"/>
<dbReference type="KEGG" id="msu:MS1442"/>
<dbReference type="eggNOG" id="COG0858">
    <property type="taxonomic scope" value="Bacteria"/>
</dbReference>
<dbReference type="HOGENOM" id="CLU_089475_5_0_6"/>
<dbReference type="OrthoDB" id="307788at2"/>
<dbReference type="Proteomes" id="UP000000607">
    <property type="component" value="Chromosome"/>
</dbReference>
<dbReference type="GO" id="GO:0005829">
    <property type="term" value="C:cytosol"/>
    <property type="evidence" value="ECO:0007669"/>
    <property type="project" value="TreeGrafter"/>
</dbReference>
<dbReference type="GO" id="GO:0043024">
    <property type="term" value="F:ribosomal small subunit binding"/>
    <property type="evidence" value="ECO:0007669"/>
    <property type="project" value="TreeGrafter"/>
</dbReference>
<dbReference type="GO" id="GO:0030490">
    <property type="term" value="P:maturation of SSU-rRNA"/>
    <property type="evidence" value="ECO:0007669"/>
    <property type="project" value="UniProtKB-UniRule"/>
</dbReference>
<dbReference type="FunFam" id="3.30.300.20:FF:000007">
    <property type="entry name" value="Ribosome-binding factor A"/>
    <property type="match status" value="1"/>
</dbReference>
<dbReference type="Gene3D" id="3.30.300.20">
    <property type="match status" value="1"/>
</dbReference>
<dbReference type="HAMAP" id="MF_00003">
    <property type="entry name" value="RbfA"/>
    <property type="match status" value="1"/>
</dbReference>
<dbReference type="InterPro" id="IPR015946">
    <property type="entry name" value="KH_dom-like_a/b"/>
</dbReference>
<dbReference type="InterPro" id="IPR000238">
    <property type="entry name" value="RbfA"/>
</dbReference>
<dbReference type="InterPro" id="IPR023799">
    <property type="entry name" value="RbfA_dom_sf"/>
</dbReference>
<dbReference type="InterPro" id="IPR020053">
    <property type="entry name" value="Ribosome-bd_factorA_CS"/>
</dbReference>
<dbReference type="NCBIfam" id="TIGR00082">
    <property type="entry name" value="rbfA"/>
    <property type="match status" value="1"/>
</dbReference>
<dbReference type="PANTHER" id="PTHR33515">
    <property type="entry name" value="RIBOSOME-BINDING FACTOR A, CHLOROPLASTIC-RELATED"/>
    <property type="match status" value="1"/>
</dbReference>
<dbReference type="PANTHER" id="PTHR33515:SF1">
    <property type="entry name" value="RIBOSOME-BINDING FACTOR A, CHLOROPLASTIC-RELATED"/>
    <property type="match status" value="1"/>
</dbReference>
<dbReference type="Pfam" id="PF02033">
    <property type="entry name" value="RBFA"/>
    <property type="match status" value="1"/>
</dbReference>
<dbReference type="SUPFAM" id="SSF89919">
    <property type="entry name" value="Ribosome-binding factor A, RbfA"/>
    <property type="match status" value="1"/>
</dbReference>
<dbReference type="PROSITE" id="PS01319">
    <property type="entry name" value="RBFA"/>
    <property type="match status" value="1"/>
</dbReference>
<proteinExistence type="inferred from homology"/>
<name>RBFA_MANSM</name>